<evidence type="ECO:0000255" key="1">
    <source>
        <dbReference type="HAMAP-Rule" id="MF_00165"/>
    </source>
</evidence>
<gene>
    <name evidence="1" type="primary">tmk</name>
    <name type="ordered locus">SSPA1535</name>
</gene>
<keyword id="KW-0067">ATP-binding</keyword>
<keyword id="KW-0418">Kinase</keyword>
<keyword id="KW-0545">Nucleotide biosynthesis</keyword>
<keyword id="KW-0547">Nucleotide-binding</keyword>
<keyword id="KW-0808">Transferase</keyword>
<reference key="1">
    <citation type="journal article" date="2009" name="BMC Genomics">
        <title>Pseudogene accumulation in the evolutionary histories of Salmonella enterica serovars Paratyphi A and Typhi.</title>
        <authorList>
            <person name="Holt K.E."/>
            <person name="Thomson N.R."/>
            <person name="Wain J."/>
            <person name="Langridge G.C."/>
            <person name="Hasan R."/>
            <person name="Bhutta Z.A."/>
            <person name="Quail M.A."/>
            <person name="Norbertczak H."/>
            <person name="Walker D."/>
            <person name="Simmonds M."/>
            <person name="White B."/>
            <person name="Bason N."/>
            <person name="Mungall K."/>
            <person name="Dougan G."/>
            <person name="Parkhill J."/>
        </authorList>
    </citation>
    <scope>NUCLEOTIDE SEQUENCE [LARGE SCALE GENOMIC DNA]</scope>
    <source>
        <strain>AKU_12601</strain>
    </source>
</reference>
<accession>B5BAH5</accession>
<sequence length="213" mass="23738">MGSNYIVIEGLEGAGKTTARDVVVETLEQLGIRNMIFTREPGGTQLAEKLRSLVLDIRSVGDEVITDKAEVLMFYAARVQLVETVIKPALAQGIWVIGDRHDLSTQAYQGGGRGIDQTMLATLRDAVLGDFRPDLTLYLDVTPEVGLKRARARGDLDRIEQESFDFFNRTRARYLELAAQDSRIRTIDATQPLDAVMRDIRATVTKWVQEQAA</sequence>
<dbReference type="EC" id="2.7.4.9" evidence="1"/>
<dbReference type="EMBL" id="FM200053">
    <property type="protein sequence ID" value="CAR59719.1"/>
    <property type="molecule type" value="Genomic_DNA"/>
</dbReference>
<dbReference type="RefSeq" id="WP_000535396.1">
    <property type="nucleotide sequence ID" value="NC_011147.1"/>
</dbReference>
<dbReference type="SMR" id="B5BAH5"/>
<dbReference type="KEGG" id="sek:SSPA1535"/>
<dbReference type="HOGENOM" id="CLU_049131_0_1_6"/>
<dbReference type="Proteomes" id="UP000001869">
    <property type="component" value="Chromosome"/>
</dbReference>
<dbReference type="GO" id="GO:0005829">
    <property type="term" value="C:cytosol"/>
    <property type="evidence" value="ECO:0007669"/>
    <property type="project" value="TreeGrafter"/>
</dbReference>
<dbReference type="GO" id="GO:0005524">
    <property type="term" value="F:ATP binding"/>
    <property type="evidence" value="ECO:0007669"/>
    <property type="project" value="UniProtKB-UniRule"/>
</dbReference>
<dbReference type="GO" id="GO:0004798">
    <property type="term" value="F:dTMP kinase activity"/>
    <property type="evidence" value="ECO:0007669"/>
    <property type="project" value="UniProtKB-UniRule"/>
</dbReference>
<dbReference type="GO" id="GO:0006233">
    <property type="term" value="P:dTDP biosynthetic process"/>
    <property type="evidence" value="ECO:0007669"/>
    <property type="project" value="InterPro"/>
</dbReference>
<dbReference type="GO" id="GO:0006235">
    <property type="term" value="P:dTTP biosynthetic process"/>
    <property type="evidence" value="ECO:0007669"/>
    <property type="project" value="UniProtKB-UniRule"/>
</dbReference>
<dbReference type="GO" id="GO:0006227">
    <property type="term" value="P:dUDP biosynthetic process"/>
    <property type="evidence" value="ECO:0007669"/>
    <property type="project" value="TreeGrafter"/>
</dbReference>
<dbReference type="CDD" id="cd01672">
    <property type="entry name" value="TMPK"/>
    <property type="match status" value="1"/>
</dbReference>
<dbReference type="FunFam" id="3.40.50.300:FF:000321">
    <property type="entry name" value="Thymidylate kinase"/>
    <property type="match status" value="1"/>
</dbReference>
<dbReference type="Gene3D" id="3.40.50.300">
    <property type="entry name" value="P-loop containing nucleotide triphosphate hydrolases"/>
    <property type="match status" value="1"/>
</dbReference>
<dbReference type="HAMAP" id="MF_00165">
    <property type="entry name" value="Thymidylate_kinase"/>
    <property type="match status" value="1"/>
</dbReference>
<dbReference type="InterPro" id="IPR027417">
    <property type="entry name" value="P-loop_NTPase"/>
</dbReference>
<dbReference type="InterPro" id="IPR039430">
    <property type="entry name" value="Thymidylate_kin-like_dom"/>
</dbReference>
<dbReference type="InterPro" id="IPR018095">
    <property type="entry name" value="Thymidylate_kin_CS"/>
</dbReference>
<dbReference type="InterPro" id="IPR018094">
    <property type="entry name" value="Thymidylate_kinase"/>
</dbReference>
<dbReference type="NCBIfam" id="TIGR00041">
    <property type="entry name" value="DTMP_kinase"/>
    <property type="match status" value="1"/>
</dbReference>
<dbReference type="PANTHER" id="PTHR10344">
    <property type="entry name" value="THYMIDYLATE KINASE"/>
    <property type="match status" value="1"/>
</dbReference>
<dbReference type="PANTHER" id="PTHR10344:SF4">
    <property type="entry name" value="UMP-CMP KINASE 2, MITOCHONDRIAL"/>
    <property type="match status" value="1"/>
</dbReference>
<dbReference type="Pfam" id="PF02223">
    <property type="entry name" value="Thymidylate_kin"/>
    <property type="match status" value="1"/>
</dbReference>
<dbReference type="SUPFAM" id="SSF52540">
    <property type="entry name" value="P-loop containing nucleoside triphosphate hydrolases"/>
    <property type="match status" value="1"/>
</dbReference>
<dbReference type="PROSITE" id="PS01331">
    <property type="entry name" value="THYMIDYLATE_KINASE"/>
    <property type="match status" value="1"/>
</dbReference>
<name>KTHY_SALPK</name>
<comment type="function">
    <text evidence="1">Phosphorylation of dTMP to form dTDP in both de novo and salvage pathways of dTTP synthesis.</text>
</comment>
<comment type="catalytic activity">
    <reaction evidence="1">
        <text>dTMP + ATP = dTDP + ADP</text>
        <dbReference type="Rhea" id="RHEA:13517"/>
        <dbReference type="ChEBI" id="CHEBI:30616"/>
        <dbReference type="ChEBI" id="CHEBI:58369"/>
        <dbReference type="ChEBI" id="CHEBI:63528"/>
        <dbReference type="ChEBI" id="CHEBI:456216"/>
        <dbReference type="EC" id="2.7.4.9"/>
    </reaction>
</comment>
<comment type="similarity">
    <text evidence="1">Belongs to the thymidylate kinase family.</text>
</comment>
<organism>
    <name type="scientific">Salmonella paratyphi A (strain AKU_12601)</name>
    <dbReference type="NCBI Taxonomy" id="554290"/>
    <lineage>
        <taxon>Bacteria</taxon>
        <taxon>Pseudomonadati</taxon>
        <taxon>Pseudomonadota</taxon>
        <taxon>Gammaproteobacteria</taxon>
        <taxon>Enterobacterales</taxon>
        <taxon>Enterobacteriaceae</taxon>
        <taxon>Salmonella</taxon>
    </lineage>
</organism>
<proteinExistence type="inferred from homology"/>
<protein>
    <recommendedName>
        <fullName evidence="1">Thymidylate kinase</fullName>
        <ecNumber evidence="1">2.7.4.9</ecNumber>
    </recommendedName>
    <alternativeName>
        <fullName evidence="1">dTMP kinase</fullName>
    </alternativeName>
</protein>
<feature type="chain" id="PRO_1000097428" description="Thymidylate kinase">
    <location>
        <begin position="1"/>
        <end position="213"/>
    </location>
</feature>
<feature type="binding site" evidence="1">
    <location>
        <begin position="10"/>
        <end position="17"/>
    </location>
    <ligand>
        <name>ATP</name>
        <dbReference type="ChEBI" id="CHEBI:30616"/>
    </ligand>
</feature>